<gene>
    <name evidence="18" type="primary">Mical2</name>
    <name evidence="16" type="synonym">Kiaa0750</name>
    <name type="synonym">Micalcl</name>
</gene>
<protein>
    <recommendedName>
        <fullName evidence="17">[F-actin]-monooxygenase MICAL2</fullName>
        <ecNumber evidence="13 14">1.14.13.225</ecNumber>
    </recommendedName>
    <alternativeName>
        <fullName evidence="15">ERK2-binding testicular protein 1</fullName>
    </alternativeName>
    <alternativeName>
        <fullName>MICAL C-terminal-like protein</fullName>
        <shortName>Mical-cL</shortName>
    </alternativeName>
    <alternativeName>
        <fullName>Molecule interacting with CasL protein 2</fullName>
        <shortName>MICAL-2</shortName>
        <shortName>mMical2</shortName>
    </alternativeName>
</protein>
<reference key="1">
    <citation type="submission" date="2005-02" db="EMBL/GenBank/DDBJ databases">
        <title>Prediction of the coding sequences of mouse homologues of KIAA gene. The complete nucleotide sequences of mouse KIAA-homologous cDNAs identified by screening of terminal sequences of cDNA clones randomly sampled from size-fractionated libraries.</title>
        <authorList>
            <person name="Okazaki N."/>
            <person name="Kikuno R.F."/>
            <person name="Ohara R."/>
            <person name="Inamoto S."/>
            <person name="Nagase T."/>
            <person name="Ohara O."/>
            <person name="Koga H."/>
        </authorList>
    </citation>
    <scope>NUCLEOTIDE SEQUENCE [LARGE SCALE MRNA] (ISOFORM 2)</scope>
    <source>
        <tissue>Brain</tissue>
    </source>
</reference>
<reference key="2">
    <citation type="journal article" date="2005" name="Science">
        <title>The transcriptional landscape of the mammalian genome.</title>
        <authorList>
            <person name="Carninci P."/>
            <person name="Kasukawa T."/>
            <person name="Katayama S."/>
            <person name="Gough J."/>
            <person name="Frith M.C."/>
            <person name="Maeda N."/>
            <person name="Oyama R."/>
            <person name="Ravasi T."/>
            <person name="Lenhard B."/>
            <person name="Wells C."/>
            <person name="Kodzius R."/>
            <person name="Shimokawa K."/>
            <person name="Bajic V.B."/>
            <person name="Brenner S.E."/>
            <person name="Batalov S."/>
            <person name="Forrest A.R."/>
            <person name="Zavolan M."/>
            <person name="Davis M.J."/>
            <person name="Wilming L.G."/>
            <person name="Aidinis V."/>
            <person name="Allen J.E."/>
            <person name="Ambesi-Impiombato A."/>
            <person name="Apweiler R."/>
            <person name="Aturaliya R.N."/>
            <person name="Bailey T.L."/>
            <person name="Bansal M."/>
            <person name="Baxter L."/>
            <person name="Beisel K.W."/>
            <person name="Bersano T."/>
            <person name="Bono H."/>
            <person name="Chalk A.M."/>
            <person name="Chiu K.P."/>
            <person name="Choudhary V."/>
            <person name="Christoffels A."/>
            <person name="Clutterbuck D.R."/>
            <person name="Crowe M.L."/>
            <person name="Dalla E."/>
            <person name="Dalrymple B.P."/>
            <person name="de Bono B."/>
            <person name="Della Gatta G."/>
            <person name="di Bernardo D."/>
            <person name="Down T."/>
            <person name="Engstrom P."/>
            <person name="Fagiolini M."/>
            <person name="Faulkner G."/>
            <person name="Fletcher C.F."/>
            <person name="Fukushima T."/>
            <person name="Furuno M."/>
            <person name="Futaki S."/>
            <person name="Gariboldi M."/>
            <person name="Georgii-Hemming P."/>
            <person name="Gingeras T.R."/>
            <person name="Gojobori T."/>
            <person name="Green R.E."/>
            <person name="Gustincich S."/>
            <person name="Harbers M."/>
            <person name="Hayashi Y."/>
            <person name="Hensch T.K."/>
            <person name="Hirokawa N."/>
            <person name="Hill D."/>
            <person name="Huminiecki L."/>
            <person name="Iacono M."/>
            <person name="Ikeo K."/>
            <person name="Iwama A."/>
            <person name="Ishikawa T."/>
            <person name="Jakt M."/>
            <person name="Kanapin A."/>
            <person name="Katoh M."/>
            <person name="Kawasawa Y."/>
            <person name="Kelso J."/>
            <person name="Kitamura H."/>
            <person name="Kitano H."/>
            <person name="Kollias G."/>
            <person name="Krishnan S.P."/>
            <person name="Kruger A."/>
            <person name="Kummerfeld S.K."/>
            <person name="Kurochkin I.V."/>
            <person name="Lareau L.F."/>
            <person name="Lazarevic D."/>
            <person name="Lipovich L."/>
            <person name="Liu J."/>
            <person name="Liuni S."/>
            <person name="McWilliam S."/>
            <person name="Madan Babu M."/>
            <person name="Madera M."/>
            <person name="Marchionni L."/>
            <person name="Matsuda H."/>
            <person name="Matsuzawa S."/>
            <person name="Miki H."/>
            <person name="Mignone F."/>
            <person name="Miyake S."/>
            <person name="Morris K."/>
            <person name="Mottagui-Tabar S."/>
            <person name="Mulder N."/>
            <person name="Nakano N."/>
            <person name="Nakauchi H."/>
            <person name="Ng P."/>
            <person name="Nilsson R."/>
            <person name="Nishiguchi S."/>
            <person name="Nishikawa S."/>
            <person name="Nori F."/>
            <person name="Ohara O."/>
            <person name="Okazaki Y."/>
            <person name="Orlando V."/>
            <person name="Pang K.C."/>
            <person name="Pavan W.J."/>
            <person name="Pavesi G."/>
            <person name="Pesole G."/>
            <person name="Petrovsky N."/>
            <person name="Piazza S."/>
            <person name="Reed J."/>
            <person name="Reid J.F."/>
            <person name="Ring B.Z."/>
            <person name="Ringwald M."/>
            <person name="Rost B."/>
            <person name="Ruan Y."/>
            <person name="Salzberg S.L."/>
            <person name="Sandelin A."/>
            <person name="Schneider C."/>
            <person name="Schoenbach C."/>
            <person name="Sekiguchi K."/>
            <person name="Semple C.A."/>
            <person name="Seno S."/>
            <person name="Sessa L."/>
            <person name="Sheng Y."/>
            <person name="Shibata Y."/>
            <person name="Shimada H."/>
            <person name="Shimada K."/>
            <person name="Silva D."/>
            <person name="Sinclair B."/>
            <person name="Sperling S."/>
            <person name="Stupka E."/>
            <person name="Sugiura K."/>
            <person name="Sultana R."/>
            <person name="Takenaka Y."/>
            <person name="Taki K."/>
            <person name="Tammoja K."/>
            <person name="Tan S.L."/>
            <person name="Tang S."/>
            <person name="Taylor M.S."/>
            <person name="Tegner J."/>
            <person name="Teichmann S.A."/>
            <person name="Ueda H.R."/>
            <person name="van Nimwegen E."/>
            <person name="Verardo R."/>
            <person name="Wei C.L."/>
            <person name="Yagi K."/>
            <person name="Yamanishi H."/>
            <person name="Zabarovsky E."/>
            <person name="Zhu S."/>
            <person name="Zimmer A."/>
            <person name="Hide W."/>
            <person name="Bult C."/>
            <person name="Grimmond S.M."/>
            <person name="Teasdale R.D."/>
            <person name="Liu E.T."/>
            <person name="Brusic V."/>
            <person name="Quackenbush J."/>
            <person name="Wahlestedt C."/>
            <person name="Mattick J.S."/>
            <person name="Hume D.A."/>
            <person name="Kai C."/>
            <person name="Sasaki D."/>
            <person name="Tomaru Y."/>
            <person name="Fukuda S."/>
            <person name="Kanamori-Katayama M."/>
            <person name="Suzuki M."/>
            <person name="Aoki J."/>
            <person name="Arakawa T."/>
            <person name="Iida J."/>
            <person name="Imamura K."/>
            <person name="Itoh M."/>
            <person name="Kato T."/>
            <person name="Kawaji H."/>
            <person name="Kawagashira N."/>
            <person name="Kawashima T."/>
            <person name="Kojima M."/>
            <person name="Kondo S."/>
            <person name="Konno H."/>
            <person name="Nakano K."/>
            <person name="Ninomiya N."/>
            <person name="Nishio T."/>
            <person name="Okada M."/>
            <person name="Plessy C."/>
            <person name="Shibata K."/>
            <person name="Shiraki T."/>
            <person name="Suzuki S."/>
            <person name="Tagami M."/>
            <person name="Waki K."/>
            <person name="Watahiki A."/>
            <person name="Okamura-Oho Y."/>
            <person name="Suzuki H."/>
            <person name="Kawai J."/>
            <person name="Hayashizaki Y."/>
        </authorList>
    </citation>
    <scope>NUCLEOTIDE SEQUENCE [LARGE SCALE MRNA] (ISOFORMS 1 AND 3)</scope>
    <scope>NUCLEOTIDE SEQUENCE [LARGE SCALE MRNA] OF 1361-1951 (ISOFORM 7)</scope>
    <source>
        <strain>C57BL/6J</strain>
        <tissue>Aorta</tissue>
        <tissue>Eye</tissue>
        <tissue>Pituitary</tissue>
        <tissue>Vein</tissue>
    </source>
</reference>
<reference key="3">
    <citation type="journal article" date="2009" name="PLoS Biol.">
        <title>Lineage-specific biology revealed by a finished genome assembly of the mouse.</title>
        <authorList>
            <person name="Church D.M."/>
            <person name="Goodstadt L."/>
            <person name="Hillier L.W."/>
            <person name="Zody M.C."/>
            <person name="Goldstein S."/>
            <person name="She X."/>
            <person name="Bult C.J."/>
            <person name="Agarwala R."/>
            <person name="Cherry J.L."/>
            <person name="DiCuccio M."/>
            <person name="Hlavina W."/>
            <person name="Kapustin Y."/>
            <person name="Meric P."/>
            <person name="Maglott D."/>
            <person name="Birtle Z."/>
            <person name="Marques A.C."/>
            <person name="Graves T."/>
            <person name="Zhou S."/>
            <person name="Teague B."/>
            <person name="Potamousis K."/>
            <person name="Churas C."/>
            <person name="Place M."/>
            <person name="Herschleb J."/>
            <person name="Runnheim R."/>
            <person name="Forrest D."/>
            <person name="Amos-Landgraf J."/>
            <person name="Schwartz D.C."/>
            <person name="Cheng Z."/>
            <person name="Lindblad-Toh K."/>
            <person name="Eichler E.E."/>
            <person name="Ponting C.P."/>
        </authorList>
    </citation>
    <scope>NUCLEOTIDE SEQUENCE [LARGE SCALE GENOMIC DNA]</scope>
    <source>
        <strain>C57BL/6J</strain>
    </source>
</reference>
<reference key="4">
    <citation type="journal article" date="2004" name="Genome Res.">
        <title>The status, quality, and expansion of the NIH full-length cDNA project: the Mammalian Gene Collection (MGC).</title>
        <authorList>
            <consortium name="The MGC Project Team"/>
        </authorList>
    </citation>
    <scope>NUCLEOTIDE SEQUENCE [LARGE SCALE MRNA] (ISOFORMS 1 AND 6)</scope>
</reference>
<reference key="5">
    <citation type="journal article" date="2008" name="Biochem. Biophys. Res. Commun.">
        <title>Molecular cloning of Ebitein1: a novel extracellular signal-regulated kinase 2-binding protein in testis.</title>
        <authorList>
            <person name="Miura K."/>
            <person name="Imaki J."/>
        </authorList>
    </citation>
    <scope>NUCLEOTIDE SEQUENCE [MRNA] OF 1173-1951 (ISOFORM 5)</scope>
    <scope>INTERACTION WITH MAPK1</scope>
    <scope>SUBCELLULAR LOCATION</scope>
    <scope>TISSUE SPECIFICITY</scope>
    <scope>DEVELOPMENTAL STAGE</scope>
    <scope>REGION</scope>
    <source>
        <strain>BALB/cJ</strain>
        <tissue>Brain</tissue>
    </source>
</reference>
<reference key="6">
    <citation type="journal article" date="2002" name="Cell">
        <title>MICALs, a family of conserved flavoprotein oxidoreductases, function in plexin-mediated axonal repulsion.</title>
        <authorList>
            <person name="Terman J.R."/>
            <person name="Mao T."/>
            <person name="Pasterkamp R.J."/>
            <person name="Yu H.-H."/>
            <person name="Kolodkin A.L."/>
        </authorList>
    </citation>
    <scope>INTERACTION WITH PLXNA4</scope>
</reference>
<reference key="7">
    <citation type="journal article" date="2008" name="Biochim. Biophys. Acta">
        <title>Identification of ERK2-binding domain of EBITEIN1, a novel ERK2-binding protein.</title>
        <authorList>
            <person name="Miura K."/>
            <person name="Imaki J."/>
        </authorList>
    </citation>
    <scope>INTERACTION WITH MAPK1</scope>
    <scope>MUTAGENESIS OF 1319-ARG--ARG-1322</scope>
</reference>
<reference key="8">
    <citation type="journal article" date="2010" name="Cell">
        <title>A tissue-specific atlas of mouse protein phosphorylation and expression.</title>
        <authorList>
            <person name="Huttlin E.L."/>
            <person name="Jedrychowski M.P."/>
            <person name="Elias J.E."/>
            <person name="Goswami T."/>
            <person name="Rad R."/>
            <person name="Beausoleil S.A."/>
            <person name="Villen J."/>
            <person name="Haas W."/>
            <person name="Sowa M.E."/>
            <person name="Gygi S.P."/>
        </authorList>
    </citation>
    <scope>PHOSPHORYLATION [LARGE SCALE ANALYSIS] AT SER-1052 (ISOFORM 2)</scope>
    <scope>IDENTIFICATION BY MASS SPECTROMETRY [LARGE SCALE ANALYSIS]</scope>
    <source>
        <tissue>Heart</tissue>
    </source>
</reference>
<reference key="9">
    <citation type="journal article" date="2013" name="Biochemistry">
        <title>Actin stimulates reduction of the MICAL-2 monooxygenase domain.</title>
        <authorList>
            <person name="McDonald C.A."/>
            <person name="Liu Y.Y."/>
            <person name="Palfey B.A."/>
        </authorList>
    </citation>
    <scope>FUNCTION</scope>
    <scope>CATALYTIC ACTIVITY</scope>
    <scope>ENZYME KINETICS</scope>
</reference>
<reference key="10">
    <citation type="journal article" date="2013" name="Mol. Cell">
        <title>MsrB1 and MICALs regulate actin assembly and macrophage function via reversible stereoselective methionine oxidation.</title>
        <authorList>
            <person name="Lee B.C."/>
            <person name="Peterfi Z."/>
            <person name="Hoffmann F.W."/>
            <person name="Moore R.E."/>
            <person name="Kaya A."/>
            <person name="Avanesov A."/>
            <person name="Tarrago L."/>
            <person name="Zhou Y."/>
            <person name="Weerapana E."/>
            <person name="Fomenko D.E."/>
            <person name="Hoffmann P.R."/>
            <person name="Gladyshev V.N."/>
        </authorList>
    </citation>
    <scope>FUNCTION</scope>
    <scope>CATALYTIC ACTIVITY</scope>
</reference>
<proteinExistence type="evidence at protein level"/>
<name>MICA2_MOUSE</name>
<keyword id="KW-0009">Actin-binding</keyword>
<keyword id="KW-0025">Alternative splicing</keyword>
<keyword id="KW-0963">Cytoplasm</keyword>
<keyword id="KW-0274">FAD</keyword>
<keyword id="KW-0285">Flavoprotein</keyword>
<keyword id="KW-0440">LIM domain</keyword>
<keyword id="KW-0479">Metal-binding</keyword>
<keyword id="KW-0503">Monooxygenase</keyword>
<keyword id="KW-0521">NADP</keyword>
<keyword id="KW-0539">Nucleus</keyword>
<keyword id="KW-0560">Oxidoreductase</keyword>
<keyword id="KW-0597">Phosphoprotein</keyword>
<keyword id="KW-1185">Reference proteome</keyword>
<keyword id="KW-0862">Zinc</keyword>
<accession>Q8BML1</accession>
<accession>B1B545</accession>
<accession>F6ZD54</accession>
<accession>F8WJF1</accession>
<accession>Q14DP1</accession>
<accession>Q3TR48</accession>
<accession>Q3UPU6</accession>
<accession>Q5DU17</accession>
<accession>Q8CID1</accession>
<accession>Q9D5U9</accession>
<dbReference type="EC" id="1.14.13.225" evidence="13 14"/>
<dbReference type="EMBL" id="AK220353">
    <property type="protein sequence ID" value="BAD90416.1"/>
    <property type="status" value="ALT_INIT"/>
    <property type="molecule type" value="mRNA"/>
</dbReference>
<dbReference type="EMBL" id="AK014911">
    <property type="protein sequence ID" value="BAB29617.1"/>
    <property type="status" value="ALT_INIT"/>
    <property type="molecule type" value="mRNA"/>
</dbReference>
<dbReference type="EMBL" id="AK030608">
    <property type="protein sequence ID" value="BAC27044.1"/>
    <property type="molecule type" value="mRNA"/>
</dbReference>
<dbReference type="EMBL" id="AK138935">
    <property type="protein sequence ID" value="BAE23824.1"/>
    <property type="molecule type" value="mRNA"/>
</dbReference>
<dbReference type="EMBL" id="AK143191">
    <property type="protein sequence ID" value="BAE25298.1"/>
    <property type="molecule type" value="mRNA"/>
</dbReference>
<dbReference type="EMBL" id="AK163078">
    <property type="protein sequence ID" value="BAE37182.1"/>
    <property type="molecule type" value="mRNA"/>
</dbReference>
<dbReference type="EMBL" id="AC100153">
    <property type="status" value="NOT_ANNOTATED_CDS"/>
    <property type="molecule type" value="Genomic_DNA"/>
</dbReference>
<dbReference type="EMBL" id="AC132392">
    <property type="status" value="NOT_ANNOTATED_CDS"/>
    <property type="molecule type" value="Genomic_DNA"/>
</dbReference>
<dbReference type="EMBL" id="AC166834">
    <property type="status" value="NOT_ANNOTATED_CDS"/>
    <property type="molecule type" value="Genomic_DNA"/>
</dbReference>
<dbReference type="EMBL" id="BC031386">
    <property type="protein sequence ID" value="AAH31386.1"/>
    <property type="molecule type" value="mRNA"/>
</dbReference>
<dbReference type="EMBL" id="BC111895">
    <property type="protein sequence ID" value="AAI11896.1"/>
    <property type="molecule type" value="mRNA"/>
</dbReference>
<dbReference type="EMBL" id="BC112415">
    <property type="protein sequence ID" value="AAI12416.1"/>
    <property type="molecule type" value="mRNA"/>
</dbReference>
<dbReference type="EMBL" id="AB359922">
    <property type="protein sequence ID" value="BAG12802.1"/>
    <property type="status" value="ALT_INIT"/>
    <property type="molecule type" value="mRNA"/>
</dbReference>
<dbReference type="CCDS" id="CCDS21753.1">
    <molecule id="Q8BML1-1"/>
</dbReference>
<dbReference type="CCDS" id="CCDS57581.1">
    <molecule id="Q8BML1-2"/>
</dbReference>
<dbReference type="RefSeq" id="NP_001180234.1">
    <molecule id="Q8BML1-2"/>
    <property type="nucleotide sequence ID" value="NM_001193305.1"/>
</dbReference>
<dbReference type="RefSeq" id="NP_081863.2">
    <property type="nucleotide sequence ID" value="NM_027587.2"/>
</dbReference>
<dbReference type="RefSeq" id="NP_796256.1">
    <molecule id="Q8BML1-1"/>
    <property type="nucleotide sequence ID" value="NM_177282.5"/>
</dbReference>
<dbReference type="RefSeq" id="XP_006508017.1">
    <molecule id="Q8BML1-2"/>
    <property type="nucleotide sequence ID" value="XM_006507954.2"/>
</dbReference>
<dbReference type="SMR" id="Q8BML1"/>
<dbReference type="BioGRID" id="236364">
    <property type="interactions" value="6"/>
</dbReference>
<dbReference type="FunCoup" id="Q8BML1">
    <property type="interactions" value="2007"/>
</dbReference>
<dbReference type="STRING" id="10090.ENSMUSP00000047639"/>
<dbReference type="GlyGen" id="Q8BML1">
    <property type="glycosylation" value="2 sites"/>
</dbReference>
<dbReference type="iPTMnet" id="Q8BML1"/>
<dbReference type="PhosphoSitePlus" id="Q8BML1"/>
<dbReference type="SwissPalm" id="Q8BML1"/>
<dbReference type="jPOST" id="Q8BML1"/>
<dbReference type="PaxDb" id="10090-ENSMUSP00000062443"/>
<dbReference type="PeptideAtlas" id="Q8BML1"/>
<dbReference type="ProteomicsDB" id="252555">
    <molecule id="Q8BML1-1"/>
</dbReference>
<dbReference type="ProteomicsDB" id="252556">
    <molecule id="Q8BML1-2"/>
</dbReference>
<dbReference type="ProteomicsDB" id="252557">
    <molecule id="Q8BML1-3"/>
</dbReference>
<dbReference type="ProteomicsDB" id="252558"/>
<dbReference type="ProteomicsDB" id="252559"/>
<dbReference type="Pumba" id="Q8BML1"/>
<dbReference type="Antibodypedia" id="24509">
    <property type="antibodies" value="153 antibodies from 23 providers"/>
</dbReference>
<dbReference type="DNASU" id="320878"/>
<dbReference type="Ensembl" id="ENSMUST00000033033.11">
    <molecule id="Q8BML1-6"/>
    <property type="protein sequence ID" value="ENSMUSP00000033033.5"/>
    <property type="gene ID" value="ENSMUSG00000038244.15"/>
</dbReference>
<dbReference type="Ensembl" id="ENSMUST00000037991.12">
    <molecule id="Q8BML1-2"/>
    <property type="protein sequence ID" value="ENSMUSP00000047639.6"/>
    <property type="gene ID" value="ENSMUSG00000038244.15"/>
</dbReference>
<dbReference type="Ensembl" id="ENSMUST00000050149.12">
    <molecule id="Q8BML1-1"/>
    <property type="protein sequence ID" value="ENSMUSP00000051163.6"/>
    <property type="gene ID" value="ENSMUSG00000038244.15"/>
</dbReference>
<dbReference type="GeneID" id="320878"/>
<dbReference type="KEGG" id="mmu:320878"/>
<dbReference type="UCSC" id="uc009jgm.2">
    <molecule id="Q8BML1-3"/>
    <property type="organism name" value="mouse"/>
</dbReference>
<dbReference type="UCSC" id="uc009jgn.2">
    <molecule id="Q8BML1-4"/>
    <property type="organism name" value="mouse"/>
</dbReference>
<dbReference type="UCSC" id="uc009jgo.2">
    <molecule id="Q8BML1-2"/>
    <property type="organism name" value="mouse"/>
</dbReference>
<dbReference type="AGR" id="MGI:2444947"/>
<dbReference type="CTD" id="9645"/>
<dbReference type="MGI" id="MGI:2444947">
    <property type="gene designation" value="Mical2"/>
</dbReference>
<dbReference type="VEuPathDB" id="HostDB:ENSMUSG00000038244"/>
<dbReference type="eggNOG" id="ENOG502QWDX">
    <property type="taxonomic scope" value="Eukaryota"/>
</dbReference>
<dbReference type="eggNOG" id="KOG1700">
    <property type="taxonomic scope" value="Eukaryota"/>
</dbReference>
<dbReference type="GeneTree" id="ENSGT00940000158780"/>
<dbReference type="HOGENOM" id="CLU_000329_0_1_1"/>
<dbReference type="InParanoid" id="Q8BML1"/>
<dbReference type="OMA" id="WAFLEVL"/>
<dbReference type="OrthoDB" id="20799at2759"/>
<dbReference type="TreeFam" id="TF324129"/>
<dbReference type="TreeFam" id="TF336446"/>
<dbReference type="BRENDA" id="1.14.13.225">
    <property type="organism ID" value="3474"/>
</dbReference>
<dbReference type="BioGRID-ORCS" id="100504195">
    <property type="hits" value="2 hits in 80 CRISPR screens"/>
</dbReference>
<dbReference type="BioGRID-ORCS" id="320878">
    <property type="hits" value="1 hit in 79 CRISPR screens"/>
</dbReference>
<dbReference type="ChiTaRS" id="Mical2">
    <property type="organism name" value="mouse"/>
</dbReference>
<dbReference type="ChiTaRS" id="Micalcl">
    <property type="organism name" value="mouse"/>
</dbReference>
<dbReference type="PRO" id="PR:Q8BML1"/>
<dbReference type="Proteomes" id="UP000000589">
    <property type="component" value="Chromosome 7"/>
</dbReference>
<dbReference type="RNAct" id="Q8BML1">
    <property type="molecule type" value="protein"/>
</dbReference>
<dbReference type="Bgee" id="ENSMUSG00000038244">
    <property type="expression patterns" value="Expressed in dentate gyrus of hippocampal formation granule cell and 196 other cell types or tissues"/>
</dbReference>
<dbReference type="ExpressionAtlas" id="Q8BML1">
    <property type="expression patterns" value="baseline and differential"/>
</dbReference>
<dbReference type="GO" id="GO:0005884">
    <property type="term" value="C:actin filament"/>
    <property type="evidence" value="ECO:0007669"/>
    <property type="project" value="Ensembl"/>
</dbReference>
<dbReference type="GO" id="GO:0005737">
    <property type="term" value="C:cytoplasm"/>
    <property type="evidence" value="ECO:0000314"/>
    <property type="project" value="UniProtKB"/>
</dbReference>
<dbReference type="GO" id="GO:0005634">
    <property type="term" value="C:nucleus"/>
    <property type="evidence" value="ECO:0000250"/>
    <property type="project" value="UniProtKB"/>
</dbReference>
<dbReference type="GO" id="GO:0003779">
    <property type="term" value="F:actin binding"/>
    <property type="evidence" value="ECO:0000314"/>
    <property type="project" value="UniProtKB"/>
</dbReference>
<dbReference type="GO" id="GO:0120501">
    <property type="term" value="F:F-actin monooxygenase activity"/>
    <property type="evidence" value="ECO:0007669"/>
    <property type="project" value="UniProtKB-EC"/>
</dbReference>
<dbReference type="GO" id="GO:0071949">
    <property type="term" value="F:FAD binding"/>
    <property type="evidence" value="ECO:0000250"/>
    <property type="project" value="UniProtKB"/>
</dbReference>
<dbReference type="GO" id="GO:0046872">
    <property type="term" value="F:metal ion binding"/>
    <property type="evidence" value="ECO:0007669"/>
    <property type="project" value="UniProtKB-KW"/>
</dbReference>
<dbReference type="GO" id="GO:0051019">
    <property type="term" value="F:mitogen-activated protein kinase binding"/>
    <property type="evidence" value="ECO:0000353"/>
    <property type="project" value="UniProtKB"/>
</dbReference>
<dbReference type="GO" id="GO:0016174">
    <property type="term" value="F:NAD(P)H oxidase H2O2-forming activity"/>
    <property type="evidence" value="ECO:0000314"/>
    <property type="project" value="UniProtKB"/>
</dbReference>
<dbReference type="GO" id="GO:0016491">
    <property type="term" value="F:oxidoreductase activity"/>
    <property type="evidence" value="ECO:0000250"/>
    <property type="project" value="UniProtKB"/>
</dbReference>
<dbReference type="GO" id="GO:0016709">
    <property type="term" value="F:oxidoreductase activity, acting on paired donors, with incorporation or reduction of molecular oxygen, NAD(P)H as one donor, and incorporation of one atom of oxygen"/>
    <property type="evidence" value="ECO:0000314"/>
    <property type="project" value="UniProtKB"/>
</dbReference>
<dbReference type="GO" id="GO:0030042">
    <property type="term" value="P:actin filament depolymerization"/>
    <property type="evidence" value="ECO:0000314"/>
    <property type="project" value="UniProtKB"/>
</dbReference>
<dbReference type="GO" id="GO:0007010">
    <property type="term" value="P:cytoskeleton organization"/>
    <property type="evidence" value="ECO:0000250"/>
    <property type="project" value="UniProtKB"/>
</dbReference>
<dbReference type="GO" id="GO:0007507">
    <property type="term" value="P:heart development"/>
    <property type="evidence" value="ECO:0000250"/>
    <property type="project" value="UniProtKB"/>
</dbReference>
<dbReference type="GO" id="GO:0001947">
    <property type="term" value="P:heart looping"/>
    <property type="evidence" value="ECO:0000250"/>
    <property type="project" value="UniProtKB"/>
</dbReference>
<dbReference type="GO" id="GO:0045944">
    <property type="term" value="P:positive regulation of transcription by RNA polymerase II"/>
    <property type="evidence" value="ECO:0000250"/>
    <property type="project" value="UniProtKB"/>
</dbReference>
<dbReference type="GO" id="GO:0019417">
    <property type="term" value="P:sulfur oxidation"/>
    <property type="evidence" value="ECO:0000314"/>
    <property type="project" value="UniProtKB"/>
</dbReference>
<dbReference type="CDD" id="cd21250">
    <property type="entry name" value="CH_MICAL2"/>
    <property type="match status" value="1"/>
</dbReference>
<dbReference type="CDD" id="cd09439">
    <property type="entry name" value="LIM_Mical"/>
    <property type="match status" value="1"/>
</dbReference>
<dbReference type="FunFam" id="3.50.50.60:FF:000004">
    <property type="entry name" value="protein-methionine sulfoxide oxidase MICAL2 isoform X1"/>
    <property type="match status" value="1"/>
</dbReference>
<dbReference type="FunFam" id="1.10.418.10:FF:000026">
    <property type="entry name" value="protein-methionine sulfoxide oxidase MICAL3 isoform X1"/>
    <property type="match status" value="1"/>
</dbReference>
<dbReference type="FunFam" id="2.10.110.10:FF:000043">
    <property type="entry name" value="protein-methionine sulfoxide oxidase MICAL3 isoform X2"/>
    <property type="match status" value="1"/>
</dbReference>
<dbReference type="Gene3D" id="1.10.418.10">
    <property type="entry name" value="Calponin-like domain"/>
    <property type="match status" value="1"/>
</dbReference>
<dbReference type="Gene3D" id="2.10.110.10">
    <property type="entry name" value="Cysteine Rich Protein"/>
    <property type="match status" value="1"/>
</dbReference>
<dbReference type="Gene3D" id="3.50.50.60">
    <property type="entry name" value="FAD/NAD(P)-binding domain"/>
    <property type="match status" value="1"/>
</dbReference>
<dbReference type="InterPro" id="IPR022735">
    <property type="entry name" value="bMERB_dom"/>
</dbReference>
<dbReference type="InterPro" id="IPR001715">
    <property type="entry name" value="CH_dom"/>
</dbReference>
<dbReference type="InterPro" id="IPR036872">
    <property type="entry name" value="CH_dom_sf"/>
</dbReference>
<dbReference type="InterPro" id="IPR050540">
    <property type="entry name" value="F-actin_Monoox_Mical"/>
</dbReference>
<dbReference type="InterPro" id="IPR002938">
    <property type="entry name" value="FAD-bd"/>
</dbReference>
<dbReference type="InterPro" id="IPR036188">
    <property type="entry name" value="FAD/NAD-bd_sf"/>
</dbReference>
<dbReference type="InterPro" id="IPR001781">
    <property type="entry name" value="Znf_LIM"/>
</dbReference>
<dbReference type="PANTHER" id="PTHR23167:SF39">
    <property type="entry name" value="[F-ACTIN]-MONOOXYGENASE MICAL2"/>
    <property type="match status" value="1"/>
</dbReference>
<dbReference type="PANTHER" id="PTHR23167">
    <property type="entry name" value="CALPONIN HOMOLOGY DOMAIN-CONTAINING PROTEIN DDB_G0272472-RELATED"/>
    <property type="match status" value="1"/>
</dbReference>
<dbReference type="Pfam" id="PF12130">
    <property type="entry name" value="bMERB_dom"/>
    <property type="match status" value="1"/>
</dbReference>
<dbReference type="Pfam" id="PF00307">
    <property type="entry name" value="CH"/>
    <property type="match status" value="1"/>
</dbReference>
<dbReference type="Pfam" id="PF01494">
    <property type="entry name" value="FAD_binding_3"/>
    <property type="match status" value="1"/>
</dbReference>
<dbReference type="Pfam" id="PF00412">
    <property type="entry name" value="LIM"/>
    <property type="match status" value="1"/>
</dbReference>
<dbReference type="Pfam" id="PF25413">
    <property type="entry name" value="Rossman_Mical"/>
    <property type="match status" value="1"/>
</dbReference>
<dbReference type="PRINTS" id="PR00420">
    <property type="entry name" value="RNGMNOXGNASE"/>
</dbReference>
<dbReference type="SMART" id="SM00033">
    <property type="entry name" value="CH"/>
    <property type="match status" value="1"/>
</dbReference>
<dbReference type="SMART" id="SM01203">
    <property type="entry name" value="DUF3585"/>
    <property type="match status" value="1"/>
</dbReference>
<dbReference type="SMART" id="SM00132">
    <property type="entry name" value="LIM"/>
    <property type="match status" value="1"/>
</dbReference>
<dbReference type="SUPFAM" id="SSF47576">
    <property type="entry name" value="Calponin-homology domain, CH-domain"/>
    <property type="match status" value="1"/>
</dbReference>
<dbReference type="SUPFAM" id="SSF51905">
    <property type="entry name" value="FAD/NAD(P)-binding domain"/>
    <property type="match status" value="1"/>
</dbReference>
<dbReference type="SUPFAM" id="SSF57716">
    <property type="entry name" value="Glucocorticoid receptor-like (DNA-binding domain)"/>
    <property type="match status" value="2"/>
</dbReference>
<dbReference type="PROSITE" id="PS51848">
    <property type="entry name" value="BMERB"/>
    <property type="match status" value="1"/>
</dbReference>
<dbReference type="PROSITE" id="PS50021">
    <property type="entry name" value="CH"/>
    <property type="match status" value="1"/>
</dbReference>
<dbReference type="PROSITE" id="PS00478">
    <property type="entry name" value="LIM_DOMAIN_1"/>
    <property type="match status" value="1"/>
</dbReference>
<dbReference type="PROSITE" id="PS50023">
    <property type="entry name" value="LIM_DOMAIN_2"/>
    <property type="match status" value="1"/>
</dbReference>
<feature type="chain" id="PRO_0000075845" description="[F-actin]-monooxygenase MICAL2">
    <location>
        <begin position="1"/>
        <end position="1951"/>
    </location>
</feature>
<feature type="domain" description="Calponin-homology (CH)" evidence="6">
    <location>
        <begin position="516"/>
        <end position="619"/>
    </location>
</feature>
<feature type="domain" description="LIM zinc-binding" evidence="7">
    <location>
        <begin position="991"/>
        <end position="1053"/>
    </location>
</feature>
<feature type="domain" description="bMERB" evidence="8">
    <location>
        <begin position="1789"/>
        <end position="1939"/>
    </location>
</feature>
<feature type="region of interest" description="Monooxygenase domain" evidence="5">
    <location>
        <begin position="2"/>
        <end position="494"/>
    </location>
</feature>
<feature type="region of interest" description="Disordered" evidence="9">
    <location>
        <begin position="663"/>
        <end position="712"/>
    </location>
</feature>
<feature type="region of interest" description="Disordered" evidence="9">
    <location>
        <begin position="891"/>
        <end position="921"/>
    </location>
</feature>
<feature type="region of interest" description="Disordered" evidence="9">
    <location>
        <begin position="1054"/>
        <end position="1141"/>
    </location>
</feature>
<feature type="region of interest" description="Disordered" evidence="9">
    <location>
        <begin position="1158"/>
        <end position="1314"/>
    </location>
</feature>
<feature type="region of interest" description="Interaction with MAPK1" evidence="11">
    <location>
        <begin position="1314"/>
        <end position="1353"/>
    </location>
</feature>
<feature type="region of interest" description="Disordered" evidence="9">
    <location>
        <begin position="1348"/>
        <end position="1368"/>
    </location>
</feature>
<feature type="region of interest" description="Disordered" evidence="9">
    <location>
        <begin position="1383"/>
        <end position="1427"/>
    </location>
</feature>
<feature type="region of interest" description="Disordered" evidence="9">
    <location>
        <begin position="1451"/>
        <end position="1476"/>
    </location>
</feature>
<feature type="region of interest" description="Disordered" evidence="9">
    <location>
        <begin position="1489"/>
        <end position="1580"/>
    </location>
</feature>
<feature type="region of interest" description="Disordered" evidence="9">
    <location>
        <begin position="1594"/>
        <end position="1624"/>
    </location>
</feature>
<feature type="region of interest" description="Disordered" evidence="9">
    <location>
        <begin position="1678"/>
        <end position="1697"/>
    </location>
</feature>
<feature type="region of interest" description="Disordered" evidence="9">
    <location>
        <begin position="1706"/>
        <end position="1731"/>
    </location>
</feature>
<feature type="region of interest" description="Disordered" evidence="9">
    <location>
        <begin position="1747"/>
        <end position="1766"/>
    </location>
</feature>
<feature type="short sequence motif" description="Nuclear localization signal" evidence="1">
    <location>
        <begin position="660"/>
        <end position="681"/>
    </location>
</feature>
<feature type="compositionally biased region" description="Low complexity" evidence="9">
    <location>
        <begin position="691"/>
        <end position="700"/>
    </location>
</feature>
<feature type="compositionally biased region" description="Pro residues" evidence="9">
    <location>
        <begin position="896"/>
        <end position="909"/>
    </location>
</feature>
<feature type="compositionally biased region" description="Low complexity" evidence="9">
    <location>
        <begin position="910"/>
        <end position="921"/>
    </location>
</feature>
<feature type="compositionally biased region" description="Basic and acidic residues" evidence="9">
    <location>
        <begin position="1061"/>
        <end position="1070"/>
    </location>
</feature>
<feature type="compositionally biased region" description="Polar residues" evidence="9">
    <location>
        <begin position="1129"/>
        <end position="1138"/>
    </location>
</feature>
<feature type="compositionally biased region" description="Polar residues" evidence="9">
    <location>
        <begin position="1228"/>
        <end position="1239"/>
    </location>
</feature>
<feature type="compositionally biased region" description="Polar residues" evidence="9">
    <location>
        <begin position="1246"/>
        <end position="1256"/>
    </location>
</feature>
<feature type="compositionally biased region" description="Pro residues" evidence="9">
    <location>
        <begin position="1257"/>
        <end position="1268"/>
    </location>
</feature>
<feature type="compositionally biased region" description="Low complexity" evidence="9">
    <location>
        <begin position="1269"/>
        <end position="1285"/>
    </location>
</feature>
<feature type="compositionally biased region" description="Polar residues" evidence="9">
    <location>
        <begin position="1291"/>
        <end position="1306"/>
    </location>
</feature>
<feature type="compositionally biased region" description="Basic and acidic residues" evidence="9">
    <location>
        <begin position="1350"/>
        <end position="1359"/>
    </location>
</feature>
<feature type="compositionally biased region" description="Basic and acidic residues" evidence="9">
    <location>
        <begin position="1532"/>
        <end position="1545"/>
    </location>
</feature>
<feature type="compositionally biased region" description="Low complexity" evidence="9">
    <location>
        <begin position="1599"/>
        <end position="1616"/>
    </location>
</feature>
<feature type="compositionally biased region" description="Basic and acidic residues" evidence="9">
    <location>
        <begin position="1678"/>
        <end position="1688"/>
    </location>
</feature>
<feature type="compositionally biased region" description="Polar residues" evidence="9">
    <location>
        <begin position="1706"/>
        <end position="1720"/>
    </location>
</feature>
<feature type="compositionally biased region" description="Low complexity" evidence="9">
    <location>
        <begin position="1749"/>
        <end position="1759"/>
    </location>
</feature>
<feature type="binding site" evidence="5">
    <location>
        <position position="97"/>
    </location>
    <ligand>
        <name>FAD</name>
        <dbReference type="ChEBI" id="CHEBI:57692"/>
    </ligand>
</feature>
<feature type="binding site" evidence="5">
    <location>
        <begin position="116"/>
        <end position="118"/>
    </location>
    <ligand>
        <name>FAD</name>
        <dbReference type="ChEBI" id="CHEBI:57692"/>
    </ligand>
</feature>
<feature type="binding site" evidence="5">
    <location>
        <begin position="123"/>
        <end position="125"/>
    </location>
    <ligand>
        <name>FAD</name>
        <dbReference type="ChEBI" id="CHEBI:57692"/>
    </ligand>
</feature>
<feature type="binding site" evidence="5">
    <location>
        <position position="183"/>
    </location>
    <ligand>
        <name>FAD</name>
        <dbReference type="ChEBI" id="CHEBI:57692"/>
    </ligand>
</feature>
<feature type="binding site" evidence="5">
    <location>
        <position position="298"/>
    </location>
    <ligand>
        <name>FAD</name>
        <dbReference type="ChEBI" id="CHEBI:57692"/>
    </ligand>
</feature>
<feature type="binding site" evidence="5">
    <location>
        <position position="398"/>
    </location>
    <ligand>
        <name>FAD</name>
        <dbReference type="ChEBI" id="CHEBI:57692"/>
    </ligand>
</feature>
<feature type="binding site" evidence="4">
    <location>
        <position position="993"/>
    </location>
    <ligand>
        <name>Zn(2+)</name>
        <dbReference type="ChEBI" id="CHEBI:29105"/>
        <label>1</label>
    </ligand>
</feature>
<feature type="binding site" evidence="4">
    <location>
        <position position="996"/>
    </location>
    <ligand>
        <name>Zn(2+)</name>
        <dbReference type="ChEBI" id="CHEBI:29105"/>
        <label>1</label>
    </ligand>
</feature>
<feature type="binding site" evidence="4">
    <location>
        <position position="1014"/>
    </location>
    <ligand>
        <name>Zn(2+)</name>
        <dbReference type="ChEBI" id="CHEBI:29105"/>
        <label>1</label>
    </ligand>
</feature>
<feature type="binding site" evidence="4">
    <location>
        <position position="1017"/>
    </location>
    <ligand>
        <name>Zn(2+)</name>
        <dbReference type="ChEBI" id="CHEBI:29105"/>
        <label>1</label>
    </ligand>
</feature>
<feature type="binding site" evidence="4">
    <location>
        <position position="1020"/>
    </location>
    <ligand>
        <name>Zn(2+)</name>
        <dbReference type="ChEBI" id="CHEBI:29105"/>
        <label>2</label>
    </ligand>
</feature>
<feature type="binding site" evidence="4">
    <location>
        <position position="1023"/>
    </location>
    <ligand>
        <name>Zn(2+)</name>
        <dbReference type="ChEBI" id="CHEBI:29105"/>
        <label>2</label>
    </ligand>
</feature>
<feature type="binding site" evidence="4">
    <location>
        <position position="1043"/>
    </location>
    <ligand>
        <name>Zn(2+)</name>
        <dbReference type="ChEBI" id="CHEBI:29105"/>
        <label>2</label>
    </ligand>
</feature>
<feature type="binding site" evidence="4">
    <location>
        <position position="1046"/>
    </location>
    <ligand>
        <name>Zn(2+)</name>
        <dbReference type="ChEBI" id="CHEBI:29105"/>
        <label>2</label>
    </ligand>
</feature>
<feature type="modified residue" description="Phosphoserine" evidence="3">
    <location>
        <position position="631"/>
    </location>
</feature>
<feature type="modified residue" description="Phosphoserine" evidence="2">
    <location>
        <position position="1683"/>
    </location>
</feature>
<feature type="splice variant" id="VSP_061300" description="In isoform 6.">
    <location>
        <begin position="1"/>
        <end position="1185"/>
    </location>
</feature>
<feature type="splice variant" id="VSP_061301" description="In isoform 1 and isoform 3.">
    <location>
        <begin position="737"/>
        <end position="976"/>
    </location>
</feature>
<feature type="splice variant" id="VSP_061302" description="In isoform 2.">
    <location>
        <begin position="928"/>
        <end position="940"/>
    </location>
</feature>
<feature type="splice variant" id="VSP_061303" description="In isoform 3.">
    <original>KFYCKPHFVHCKTSSK</original>
    <variation>NPRGQESTSLWPWSQM</variation>
    <location>
        <begin position="1040"/>
        <end position="1055"/>
    </location>
</feature>
<feature type="splice variant" id="VSP_061304" description="In isoform 3.">
    <location>
        <begin position="1056"/>
        <end position="1951"/>
    </location>
</feature>
<feature type="splice variant" id="VSP_061305" description="In isoform 1.">
    <original>DEPISPKKPKSVPEPNPRDVEAEATSPRPSEWTSVRISPGEDTVRQDVLAVRVLVTSEDSSSDTESDYGSITAPCAGAYEERPQLPESPPLSKPLTRH</original>
    <variation>GTSTSFFRKALSWPLRLTRGLLNLPQSLLRWMQGLQEAAGHHVRDNAHNYCFMFELLSLGLLLLWAFSKVLAAMYRESEESLENIRSWLLRFIPVKLQ</variation>
    <location>
        <begin position="1103"/>
        <end position="1200"/>
    </location>
</feature>
<feature type="splice variant" id="VSP_061306" description="In isoform 2.">
    <original>DEPISPKKPKSVP</original>
    <variation>VRFSLPVLHPLLG</variation>
    <location>
        <begin position="1103"/>
        <end position="1115"/>
    </location>
</feature>
<feature type="splice variant" id="VSP_061307" description="In isoform 2.">
    <location>
        <begin position="1116"/>
        <end position="1951"/>
    </location>
</feature>
<feature type="splice variant" id="VSP_061308" description="In isoform 6.">
    <original>QLPESPPLSKPLTRHISLRENLTQPVSLLHEEPQALP</original>
    <variation>MARRPDSRRQAAVAARARSWELTSPIANTKQKVNGKK</variation>
    <location>
        <begin position="1186"/>
        <end position="1222"/>
    </location>
</feature>
<feature type="splice variant" id="VSP_061309" description="In isoform 1.">
    <location>
        <begin position="1201"/>
        <end position="1951"/>
    </location>
</feature>
<feature type="splice variant" id="VSP_061310" description="In isoform 5 and isoform 6.">
    <original>T</original>
    <variation>PA</variation>
    <location>
        <position position="1298"/>
    </location>
</feature>
<feature type="splice variant" id="VSP_061311" description="In isoform 5, isoform 7 and isoform 6.">
    <original>RKLEGGEGGSSLVSSLVLVSD</original>
    <variation>H</variation>
    <location>
        <begin position="1723"/>
        <end position="1743"/>
    </location>
</feature>
<feature type="splice variant" id="VSP_061312" description="In isoform 6.">
    <original>AIQRQLEEVEERQRTL</original>
    <variation>VCILQSEASAWPWPSS</variation>
    <location>
        <begin position="1801"/>
        <end position="1816"/>
    </location>
</feature>
<feature type="splice variant" id="VSP_061313" description="In isoform 6.">
    <location>
        <begin position="1817"/>
        <end position="1951"/>
    </location>
</feature>
<feature type="splice variant" id="VSP_061314" description="In isoform 5.">
    <location>
        <position position="1832"/>
    </location>
</feature>
<feature type="mutagenesis site" description="Abolishes interaction with MAPK1." evidence="12">
    <original>RRAR</original>
    <variation>AAAA</variation>
    <variation>AAAR</variation>
    <variation>ARAR</variation>
    <variation>RAAR</variation>
    <location>
        <begin position="1319"/>
        <end position="1322"/>
    </location>
</feature>
<feature type="sequence conflict" description="In Ref. 2; BAB29617." evidence="17" ref="2">
    <original>S</original>
    <variation>C</variation>
    <location>
        <position position="1362"/>
    </location>
</feature>
<feature type="modified residue" description="Phosphoserine" evidence="19">
    <location sequence="Q8BML1-2">
        <position position="1052"/>
    </location>
</feature>
<sequence length="1951" mass="218042">MGENEDEKQAQASQVFENFVQATTCKGTLQAFNILTCLLDLDPLDHRNFYSQLKSKVNTWKAKALWHKLDKRGSHKEYKRGKACSNTKCLIVGGGPCGLRTAIELAYLGAKVVVVEKRDTFSRNNVLHLWPFTIHDLRGLGAKKFYGKFCAGSIDHISIRQLQLILFKVALMLGVEVHVNVEFVRVLEPPEDQENQKVGWRAEFLPADHALSDFEFDVIIGADGHRNTLEGFRRKEFRGKLAIAITANFINRNSTAEAKVEEISGVAFIFNQKFFQDLKEETGIDLENIVYYKDSTHYFVMTAKKQSLLDKGVILNDYIDTEMLLCSENVNQDNLLSYAREAADFATNYQLPSLDFAINHNGQPDVAMFDFTSMYASENAALMRERQAHQLLVALVGDSLLEPFWPMGTGCARGFLAAFDTAWMVKSWDQGTPPLEVLAERESLYRLLPQTTPENINKNFEQYTLDPATRYPNLNLHCVRPHQVKHLYITKEMDRFPLERWGSVRRSVSLSRRESDIRPNKLLTWCQQQTKGYQHVRVTDLTTSWRSGLALCAIIHSFRPELINFDSLNEDDAVENNQLAFDVAKREFGILPVTTGKEMASTQEPDKLSMVMYLSKFYELFRGTPLRPMDSWRKNYGENADFGLGKTFIQNNYLNLTLPRKRTPRVDTQTEENDMNKRRRQGFNHLEELPSFSSRSLGSSQEYAKESGSQNKVKHMANQLLAKFEENTRNPSVVKQDCRRVSGIGKPVLCSASRPPGTSCCPKLEESTPRLPPPLKRQFSSTVATGQVLRELNQVPASGECPSRPWRARAKSDLQLGGVENLATLPRTCQGALALSGVLRRLQQVEEKVLQKRAQNLANREFHTKNIKEKAAHLASMFGHGDLPQDKLLSKRVPHAHPPSPPSCLPSPHPAAASSPPAADSVSPARKVVALNHRLPPPLHLTVGKVSSGIGAAAEVLVNLYLNDHRPKTQATSPDLESPRKAFPLSLGGRDTCYFCKKRVYMIERLSAEGHFFHQECFRCSVCSATLRLAAYAFDCDEGKFYCKPHFVHCKTSSKQRKRRAELNQQREEEGTWQEQEAPRRDVPTESSCAVAAISTPEGSPPDEPISPKKPKSVPEPNPRDVEAEATSPRPSEWTSVRISPGEDTVRQDVLAVRVLVTSEDSSSDTESDYGSITAPCAGAYEERPQLPESPPLSKPLTRHISLRENLTQPVSLLHEEPQALPALQRAHSLQSPTPSKYQNWRRRFQSNSTPMNQRAPSPPKEPPPPPSLSSSSSLPSSFSSASVPGHTADDSSSPQVTYNLHSPQISRGDVSPTPIYLRRARAQGIVKEIPLYLPHSPMLESTEDCLVEPGRESLRSPEEISSSEGCQEARALGNTRSIQHPILGKDQYLPNQNLALGAAGNPGDPREESRMGQPGGPELSKERKLGLKKLVLTEEQKNKLLDWSDCTQEHKTGEQLSQESAENIRGGSLKPTCSSTLSQAVKEKLLSQKKALGGMRTPAVKAPQEREVPPPKSPLKLIANAILRSLLHNSEAGKKTSPKPESKTLPRGQPHARSFSLRKLGSSKDGDQQSPGRHMAKKASAFFSLASPTSKVAQASDLSLPNSILRSRSLPSRPSKMFFSTTPHSKVEDVPTLLEKVSLQDATHSPKTGASHISSLGLKDKSFESFLQECKQRKDIGDFFNSPKEEGPPGNRVPSLEKLVQPVGSTSMGQVAHPSSTGQDARKLEGGEGGSSLVSSLVLVSDPVAPVTEATSSPTSSSAEEEADSQLSLRIKEKILRRRRKLEKQSAKQEELKRLHKAQAIQRQLEEVEERQRTLAIQGVKLEKVLRGEAADSGTQDEAQLLQEWFKLVLEKNKLMRYESELLIMAQELELEDHQSRLEQKLRQKMLKDEGQKDENDLKEEQEIFEEMMQVIEQRNKLVDSLEEQRVKERTQDQHFENFVLSRGCQLSRT</sequence>
<organism>
    <name type="scientific">Mus musculus</name>
    <name type="common">Mouse</name>
    <dbReference type="NCBI Taxonomy" id="10090"/>
    <lineage>
        <taxon>Eukaryota</taxon>
        <taxon>Metazoa</taxon>
        <taxon>Chordata</taxon>
        <taxon>Craniata</taxon>
        <taxon>Vertebrata</taxon>
        <taxon>Euteleostomi</taxon>
        <taxon>Mammalia</taxon>
        <taxon>Eutheria</taxon>
        <taxon>Euarchontoglires</taxon>
        <taxon>Glires</taxon>
        <taxon>Rodentia</taxon>
        <taxon>Myomorpha</taxon>
        <taxon>Muroidea</taxon>
        <taxon>Muridae</taxon>
        <taxon>Murinae</taxon>
        <taxon>Mus</taxon>
        <taxon>Mus</taxon>
    </lineage>
</organism>
<evidence type="ECO:0000250" key="1"/>
<evidence type="ECO:0000250" key="2">
    <source>
        <dbReference type="UniProtKB" id="D4A1F2"/>
    </source>
</evidence>
<evidence type="ECO:0000250" key="3">
    <source>
        <dbReference type="UniProtKB" id="O94851"/>
    </source>
</evidence>
<evidence type="ECO:0000250" key="4">
    <source>
        <dbReference type="UniProtKB" id="Q8TDZ2"/>
    </source>
</evidence>
<evidence type="ECO:0000250" key="5">
    <source>
        <dbReference type="UniProtKB" id="Q8VDP3"/>
    </source>
</evidence>
<evidence type="ECO:0000255" key="6">
    <source>
        <dbReference type="PROSITE-ProRule" id="PRU00044"/>
    </source>
</evidence>
<evidence type="ECO:0000255" key="7">
    <source>
        <dbReference type="PROSITE-ProRule" id="PRU00125"/>
    </source>
</evidence>
<evidence type="ECO:0000255" key="8">
    <source>
        <dbReference type="PROSITE-ProRule" id="PRU01195"/>
    </source>
</evidence>
<evidence type="ECO:0000256" key="9">
    <source>
        <dbReference type="SAM" id="MobiDB-lite"/>
    </source>
</evidence>
<evidence type="ECO:0000269" key="10">
    <source>
    </source>
</evidence>
<evidence type="ECO:0000269" key="11">
    <source>
    </source>
</evidence>
<evidence type="ECO:0000269" key="12">
    <source>
    </source>
</evidence>
<evidence type="ECO:0000269" key="13">
    <source>
    </source>
</evidence>
<evidence type="ECO:0000269" key="14">
    <source>
    </source>
</evidence>
<evidence type="ECO:0000303" key="15">
    <source>
    </source>
</evidence>
<evidence type="ECO:0000303" key="16">
    <source ref="1"/>
</evidence>
<evidence type="ECO:0000305" key="17"/>
<evidence type="ECO:0000312" key="18">
    <source>
        <dbReference type="MGI" id="MGI:2444947"/>
    </source>
</evidence>
<evidence type="ECO:0007744" key="19">
    <source>
    </source>
</evidence>
<comment type="function">
    <text evidence="3 4 13 14">Methionine monooxygenase that promotes depolymerization of F-actin by mediating oxidation of residues 'Met-44' and 'Met-47' on actin to form methionine-sulfoxide, resulting in actin filament disassembly and preventing repolymerization (PubMed:23911929, PubMed:23927065). Regulates the disassembly of branched actin networks also by oxidizing ARP3B-containing ARP2/3 complexes leading to ARP3B dissociation from the network. Acts as a key regulator of the SRF signaling pathway elicited by nerve growth factor and serum: mediates oxidation and subsequent depolymerization of nuclear actin, leading to increase MKL1/MRTF-A presence in the nucleus and promote SRF:MKL1/MRTF-A-dependent gene transcription. Does not activate SRF:MKL1/MRTF-A through RhoA (By similarity).</text>
</comment>
<comment type="catalytic activity">
    <reaction evidence="13 14">
        <text>L-methionyl-[F-actin] + NADPH + O2 + H(+) = L-methionyl-(R)-S-oxide-[F-actin] + NADP(+) + H2O</text>
        <dbReference type="Rhea" id="RHEA:51308"/>
        <dbReference type="Rhea" id="RHEA-COMP:12953"/>
        <dbReference type="Rhea" id="RHEA-COMP:12956"/>
        <dbReference type="ChEBI" id="CHEBI:15377"/>
        <dbReference type="ChEBI" id="CHEBI:15378"/>
        <dbReference type="ChEBI" id="CHEBI:15379"/>
        <dbReference type="ChEBI" id="CHEBI:16044"/>
        <dbReference type="ChEBI" id="CHEBI:45764"/>
        <dbReference type="ChEBI" id="CHEBI:57783"/>
        <dbReference type="ChEBI" id="CHEBI:58349"/>
        <dbReference type="EC" id="1.14.13.225"/>
    </reaction>
</comment>
<comment type="cofactor">
    <cofactor evidence="4">
        <name>FAD</name>
        <dbReference type="ChEBI" id="CHEBI:57692"/>
    </cofactor>
</comment>
<comment type="subunit">
    <text evidence="3 10 11 12">Interacts with PLXNA4 (PubMed:12110185). Interacts with RAB1B (By similarity). Interacts with MAPK1/ERK2 (PubMed:18241670, PubMed:18590835). Interacts with RAB1B, RAB35, RAB8A, RAB10, RAB13 and RAB15 (in their GTP-bound forms); binding to RAB1B and RAB35 is of low affinity compared to other Rab proteins; binding to RAB1B and RAB35 is of low affinity compared to other Rab proteins; at least in case of RAB8A may bind 2 molecules of RAB8A simultaneously through a high and a low affinity binding site, respectively (By similarity).</text>
</comment>
<comment type="subcellular location">
    <subcellularLocation>
        <location evidence="11">Cytoplasm</location>
    </subcellularLocation>
    <subcellularLocation>
        <location evidence="3">Nucleus</location>
    </subcellularLocation>
</comment>
<comment type="alternative products">
    <event type="alternative splicing"/>
    <isoform>
        <id>Q8BML1-4</id>
        <name>4</name>
        <sequence type="displayed"/>
    </isoform>
    <isoform>
        <id>Q8BML1-1</id>
        <name>1</name>
        <sequence type="described" ref="VSP_061301 VSP_061305 VSP_061309"/>
    </isoform>
    <isoform>
        <id>Q8BML1-2</id>
        <name>2</name>
        <sequence type="described" ref="VSP_061302 VSP_061306 VSP_061307"/>
    </isoform>
    <isoform>
        <id>Q8BML1-3</id>
        <name>3</name>
        <sequence type="described" ref="VSP_061301 VSP_061303 VSP_061304"/>
    </isoform>
    <isoform>
        <id>Q8BML1-5</id>
        <name>5</name>
        <name evidence="15">Ebitein1</name>
        <sequence type="described" ref="VSP_061310 VSP_061311 VSP_061314"/>
    </isoform>
    <isoform>
        <id>Q8BML1-6</id>
        <name>6</name>
        <sequence type="described" ref="VSP_061300 VSP_061308 VSP_061310 VSP_061311 VSP_061312 VSP_061313"/>
    </isoform>
    <isoform>
        <id>Q8BML1-7</id>
        <name>7</name>
        <sequence type="described" ref="VSP_061311"/>
    </isoform>
</comment>
<comment type="tissue specificity">
    <text evidence="11">Expressed only in testis (at protein level).</text>
</comment>
<comment type="developmental stage">
    <text evidence="11">During spermatogenesis, first expressed after meiosis, gradually increases to a maximum at Oakberg's stage 9 and then decreases until it is undetectable when spermatozoa begin to generate flagella (at protein level).</text>
</comment>
<comment type="domain">
    <text evidence="3">The C-terminal RAB-binding domain (RBD)(1796-1945), also described as bivalent Mical/EHBP Rab binding (bMERB) domain, mediates binding to predominantly Rab8, Rab10, Rab10, Rab13 and Rab15 (in their GTP-bound forms).</text>
</comment>
<comment type="similarity">
    <text evidence="17">Belongs to the Mical family.</text>
</comment>
<comment type="sequence caution" evidence="17">
    <conflict type="erroneous initiation">
        <sequence resource="EMBL-CDS" id="BAB29617"/>
    </conflict>
    <text>Truncated N-terminus.</text>
</comment>
<comment type="sequence caution" evidence="17">
    <conflict type="erroneous initiation">
        <sequence resource="EMBL-CDS" id="BAD90416"/>
    </conflict>
    <text>Extended N-terminus.</text>
</comment>
<comment type="sequence caution" evidence="17">
    <conflict type="erroneous initiation">
        <sequence resource="EMBL-CDS" id="BAG12802"/>
    </conflict>
    <text>Truncated N-terminus.</text>
</comment>